<name>YQGF_HELPH</name>
<reference key="1">
    <citation type="journal article" date="2006" name="Proc. Natl. Acad. Sci. U.S.A.">
        <title>The complete genome sequence of a chronic atrophic gastritis Helicobacter pylori strain: evolution during disease progression.</title>
        <authorList>
            <person name="Oh J.D."/>
            <person name="Kling-Baeckhed H."/>
            <person name="Giannakis M."/>
            <person name="Xu J."/>
            <person name="Fulton R.S."/>
            <person name="Fulton L.A."/>
            <person name="Cordum H.S."/>
            <person name="Wang C."/>
            <person name="Elliott G."/>
            <person name="Edwards J."/>
            <person name="Mardis E.R."/>
            <person name="Engstrand L.G."/>
            <person name="Gordon J.I."/>
        </authorList>
    </citation>
    <scope>NUCLEOTIDE SEQUENCE [LARGE SCALE GENOMIC DNA]</scope>
    <source>
        <strain>HPAG1</strain>
    </source>
</reference>
<accession>Q1CUG7</accession>
<organism>
    <name type="scientific">Helicobacter pylori (strain HPAG1)</name>
    <dbReference type="NCBI Taxonomy" id="357544"/>
    <lineage>
        <taxon>Bacteria</taxon>
        <taxon>Pseudomonadati</taxon>
        <taxon>Campylobacterota</taxon>
        <taxon>Epsilonproteobacteria</taxon>
        <taxon>Campylobacterales</taxon>
        <taxon>Helicobacteraceae</taxon>
        <taxon>Helicobacter</taxon>
    </lineage>
</organism>
<comment type="function">
    <text evidence="1">Could be a nuclease involved in processing of the 5'-end of pre-16S rRNA.</text>
</comment>
<comment type="subcellular location">
    <subcellularLocation>
        <location evidence="1">Cytoplasm</location>
    </subcellularLocation>
</comment>
<comment type="similarity">
    <text evidence="1">Belongs to the YqgF nuclease family.</text>
</comment>
<evidence type="ECO:0000255" key="1">
    <source>
        <dbReference type="HAMAP-Rule" id="MF_00651"/>
    </source>
</evidence>
<feature type="chain" id="PRO_0000257540" description="Putative pre-16S rRNA nuclease">
    <location>
        <begin position="1"/>
        <end position="134"/>
    </location>
</feature>
<protein>
    <recommendedName>
        <fullName evidence="1">Putative pre-16S rRNA nuclease</fullName>
        <ecNumber evidence="1">3.1.-.-</ecNumber>
    </recommendedName>
</protein>
<dbReference type="EC" id="3.1.-.-" evidence="1"/>
<dbReference type="EMBL" id="CP000241">
    <property type="protein sequence ID" value="ABF84405.1"/>
    <property type="molecule type" value="Genomic_DNA"/>
</dbReference>
<dbReference type="RefSeq" id="WP_000599189.1">
    <property type="nucleotide sequence ID" value="NC_008086.1"/>
</dbReference>
<dbReference type="SMR" id="Q1CUG7"/>
<dbReference type="KEGG" id="hpa:HPAG1_0338"/>
<dbReference type="HOGENOM" id="CLU_098240_2_2_7"/>
<dbReference type="GO" id="GO:0005829">
    <property type="term" value="C:cytosol"/>
    <property type="evidence" value="ECO:0007669"/>
    <property type="project" value="TreeGrafter"/>
</dbReference>
<dbReference type="GO" id="GO:0004518">
    <property type="term" value="F:nuclease activity"/>
    <property type="evidence" value="ECO:0007669"/>
    <property type="project" value="UniProtKB-KW"/>
</dbReference>
<dbReference type="GO" id="GO:0000967">
    <property type="term" value="P:rRNA 5'-end processing"/>
    <property type="evidence" value="ECO:0007669"/>
    <property type="project" value="UniProtKB-UniRule"/>
</dbReference>
<dbReference type="CDD" id="cd16964">
    <property type="entry name" value="YqgF"/>
    <property type="match status" value="1"/>
</dbReference>
<dbReference type="FunFam" id="3.30.420.140:FF:000013">
    <property type="entry name" value="Putative pre-16S rRNA nuclease"/>
    <property type="match status" value="1"/>
</dbReference>
<dbReference type="Gene3D" id="3.30.420.140">
    <property type="entry name" value="YqgF/RNase H-like domain"/>
    <property type="match status" value="1"/>
</dbReference>
<dbReference type="HAMAP" id="MF_00651">
    <property type="entry name" value="Nuclease_YqgF"/>
    <property type="match status" value="1"/>
</dbReference>
<dbReference type="InterPro" id="IPR012337">
    <property type="entry name" value="RNaseH-like_sf"/>
</dbReference>
<dbReference type="InterPro" id="IPR005227">
    <property type="entry name" value="YqgF"/>
</dbReference>
<dbReference type="InterPro" id="IPR006641">
    <property type="entry name" value="YqgF/RNaseH-like_dom"/>
</dbReference>
<dbReference type="InterPro" id="IPR037027">
    <property type="entry name" value="YqgF/RNaseH-like_dom_sf"/>
</dbReference>
<dbReference type="NCBIfam" id="NF001026">
    <property type="entry name" value="PRK00109.2-2"/>
    <property type="match status" value="1"/>
</dbReference>
<dbReference type="NCBIfam" id="TIGR00250">
    <property type="entry name" value="RNAse_H_YqgF"/>
    <property type="match status" value="1"/>
</dbReference>
<dbReference type="PANTHER" id="PTHR33317">
    <property type="entry name" value="POLYNUCLEOTIDYL TRANSFERASE, RIBONUCLEASE H-LIKE SUPERFAMILY PROTEIN"/>
    <property type="match status" value="1"/>
</dbReference>
<dbReference type="PANTHER" id="PTHR33317:SF4">
    <property type="entry name" value="POLYNUCLEOTIDYL TRANSFERASE, RIBONUCLEASE H-LIKE SUPERFAMILY PROTEIN"/>
    <property type="match status" value="1"/>
</dbReference>
<dbReference type="Pfam" id="PF03652">
    <property type="entry name" value="RuvX"/>
    <property type="match status" value="1"/>
</dbReference>
<dbReference type="SMART" id="SM00732">
    <property type="entry name" value="YqgFc"/>
    <property type="match status" value="1"/>
</dbReference>
<dbReference type="SUPFAM" id="SSF53098">
    <property type="entry name" value="Ribonuclease H-like"/>
    <property type="match status" value="1"/>
</dbReference>
<gene>
    <name type="ordered locus">HPAG1_0338</name>
</gene>
<keyword id="KW-0963">Cytoplasm</keyword>
<keyword id="KW-0378">Hydrolase</keyword>
<keyword id="KW-0540">Nuclease</keyword>
<keyword id="KW-0690">Ribosome biogenesis</keyword>
<proteinExistence type="inferred from homology"/>
<sequence length="134" mass="15212">MILACDVGLKRIGIAALLNGVILPLEAILRQNRNQASRDLSDLLREKNIQVLVVGKPNESYADTNARIEHFIKLVDFKGEIVFINEDNSSIEAYENLEHLGKKNKWLAIKDGRLDSLSACRILERYCQQVLKNH</sequence>